<comment type="function">
    <text evidence="1">Participates in the assembly of the infectious particles by decorating the outer surface of the capsid shell and thus forming a layer between the capsid and the tegument. Complexes composed of the major capsid protein and small capsomere-interacting protein/SCP assemble together in the host cytoplasm and are translocated to the nucleus, where they accumulate and participate in capsid assembly.</text>
</comment>
<comment type="subunit">
    <text evidence="1">Interacts with the major capsid protein/MCP.</text>
</comment>
<comment type="subcellular location">
    <subcellularLocation>
        <location evidence="1">Virion</location>
    </subcellularLocation>
    <subcellularLocation>
        <location evidence="1">Host nucleus</location>
    </subcellularLocation>
</comment>
<comment type="similarity">
    <text evidence="1">Belongs to the herpesviridae small capsomere-interacting protein family.</text>
</comment>
<dbReference type="EMBL" id="AY464052">
    <property type="protein sequence ID" value="AAS45909.1"/>
    <property type="molecule type" value="Genomic_DNA"/>
</dbReference>
<dbReference type="SMR" id="P84395"/>
<dbReference type="KEGG" id="vg:1487491"/>
<dbReference type="Proteomes" id="UP000008296">
    <property type="component" value="Segment"/>
</dbReference>
<dbReference type="GO" id="GO:0042025">
    <property type="term" value="C:host cell nucleus"/>
    <property type="evidence" value="ECO:0007669"/>
    <property type="project" value="UniProtKB-SubCell"/>
</dbReference>
<dbReference type="GO" id="GO:0019028">
    <property type="term" value="C:viral capsid"/>
    <property type="evidence" value="ECO:0007669"/>
    <property type="project" value="UniProtKB-UniRule"/>
</dbReference>
<dbReference type="GO" id="GO:0016032">
    <property type="term" value="P:viral process"/>
    <property type="evidence" value="ECO:0007669"/>
    <property type="project" value="UniProtKB-UniRule"/>
</dbReference>
<dbReference type="HAMAP" id="MF_04020">
    <property type="entry name" value="HSV_SCP_alphahv"/>
    <property type="match status" value="1"/>
</dbReference>
<dbReference type="InterPro" id="IPR007584">
    <property type="entry name" value="Herpes_UL35"/>
</dbReference>
<dbReference type="Pfam" id="PF04496">
    <property type="entry name" value="Herpes_UL35"/>
    <property type="match status" value="1"/>
</dbReference>
<reference evidence="2 3" key="1">
    <citation type="submission" date="2003-11" db="EMBL/GenBank/DDBJ databases">
        <authorList>
            <person name="Davis-Poynter N."/>
            <person name="Nugent J."/>
            <person name="Birch-Machin I."/>
            <person name="Allen G.P."/>
        </authorList>
    </citation>
    <scope>NUCLEOTIDE SEQUENCE [LARGE SCALE GENOMIC DNA]</scope>
</reference>
<gene>
    <name evidence="1" type="primary">SCP</name>
    <name type="ordered locus">25</name>
</gene>
<accession>P84395</accession>
<accession>Q6S6P6</accession>
<name>SCP_EHV1V</name>
<organism>
    <name type="scientific">Equine herpesvirus 1 (strain V592)</name>
    <name type="common">EHV-1</name>
    <name type="synonym">Equine abortion virus</name>
    <dbReference type="NCBI Taxonomy" id="310273"/>
    <lineage>
        <taxon>Viruses</taxon>
        <taxon>Duplodnaviria</taxon>
        <taxon>Heunggongvirae</taxon>
        <taxon>Peploviricota</taxon>
        <taxon>Herviviricetes</taxon>
        <taxon>Herpesvirales</taxon>
        <taxon>Orthoherpesviridae</taxon>
        <taxon>Alphaherpesvirinae</taxon>
        <taxon>Varicellovirus</taxon>
        <taxon>Varicellovirus equidalpha1</taxon>
        <taxon>Equid alphaherpesvirus 1</taxon>
    </lineage>
</organism>
<evidence type="ECO:0000255" key="1">
    <source>
        <dbReference type="HAMAP-Rule" id="MF_04020"/>
    </source>
</evidence>
<evidence type="ECO:0000305" key="2"/>
<evidence type="ECO:0000312" key="3">
    <source>
        <dbReference type="EMBL" id="AAS45909.1"/>
    </source>
</evidence>
<organismHost>
    <name type="scientific">Equus caballus</name>
    <name type="common">Horse</name>
    <dbReference type="NCBI Taxonomy" id="9796"/>
</organismHost>
<protein>
    <recommendedName>
        <fullName evidence="1">Small capsomere-interacting protein</fullName>
    </recommendedName>
</protein>
<feature type="chain" id="PRO_0000115736" description="Small capsomere-interacting protein">
    <location>
        <begin position="1"/>
        <end position="119"/>
    </location>
</feature>
<proteinExistence type="inferred from homology"/>
<sequence>MAADKQQQQAPVAFNPADPPNIKAANFKDMLPVDVITILNQNIDELDYTKYTEDEISEGLKQLFMGTARTMVSLRQRHLKSLVRRSDMFAQNDASTWARPNIGLKRTFPPRFMQPISED</sequence>
<keyword id="KW-0167">Capsid protein</keyword>
<keyword id="KW-1048">Host nucleus</keyword>
<keyword id="KW-0946">Virion</keyword>